<keyword id="KW-0479">Metal-binding</keyword>
<keyword id="KW-1185">Reference proteome</keyword>
<keyword id="KW-0862">Zinc</keyword>
<keyword id="KW-0863">Zinc-finger</keyword>
<proteinExistence type="predicted"/>
<organism>
    <name type="scientific">Dictyostelium discoideum</name>
    <name type="common">Social amoeba</name>
    <dbReference type="NCBI Taxonomy" id="44689"/>
    <lineage>
        <taxon>Eukaryota</taxon>
        <taxon>Amoebozoa</taxon>
        <taxon>Evosea</taxon>
        <taxon>Eumycetozoa</taxon>
        <taxon>Dictyostelia</taxon>
        <taxon>Dictyosteliales</taxon>
        <taxon>Dictyosteliaceae</taxon>
        <taxon>Dictyostelium</taxon>
    </lineage>
</organism>
<protein>
    <recommendedName>
        <fullName>RING finger protein 113 homolog</fullName>
    </recommendedName>
</protein>
<reference key="1">
    <citation type="journal article" date="2005" name="Nature">
        <title>The genome of the social amoeba Dictyostelium discoideum.</title>
        <authorList>
            <person name="Eichinger L."/>
            <person name="Pachebat J.A."/>
            <person name="Gloeckner G."/>
            <person name="Rajandream M.A."/>
            <person name="Sucgang R."/>
            <person name="Berriman M."/>
            <person name="Song J."/>
            <person name="Olsen R."/>
            <person name="Szafranski K."/>
            <person name="Xu Q."/>
            <person name="Tunggal B."/>
            <person name="Kummerfeld S."/>
            <person name="Madera M."/>
            <person name="Konfortov B.A."/>
            <person name="Rivero F."/>
            <person name="Bankier A.T."/>
            <person name="Lehmann R."/>
            <person name="Hamlin N."/>
            <person name="Davies R."/>
            <person name="Gaudet P."/>
            <person name="Fey P."/>
            <person name="Pilcher K."/>
            <person name="Chen G."/>
            <person name="Saunders D."/>
            <person name="Sodergren E.J."/>
            <person name="Davis P."/>
            <person name="Kerhornou A."/>
            <person name="Nie X."/>
            <person name="Hall N."/>
            <person name="Anjard C."/>
            <person name="Hemphill L."/>
            <person name="Bason N."/>
            <person name="Farbrother P."/>
            <person name="Desany B."/>
            <person name="Just E."/>
            <person name="Morio T."/>
            <person name="Rost R."/>
            <person name="Churcher C.M."/>
            <person name="Cooper J."/>
            <person name="Haydock S."/>
            <person name="van Driessche N."/>
            <person name="Cronin A."/>
            <person name="Goodhead I."/>
            <person name="Muzny D.M."/>
            <person name="Mourier T."/>
            <person name="Pain A."/>
            <person name="Lu M."/>
            <person name="Harper D."/>
            <person name="Lindsay R."/>
            <person name="Hauser H."/>
            <person name="James K.D."/>
            <person name="Quiles M."/>
            <person name="Madan Babu M."/>
            <person name="Saito T."/>
            <person name="Buchrieser C."/>
            <person name="Wardroper A."/>
            <person name="Felder M."/>
            <person name="Thangavelu M."/>
            <person name="Johnson D."/>
            <person name="Knights A."/>
            <person name="Loulseged H."/>
            <person name="Mungall K.L."/>
            <person name="Oliver K."/>
            <person name="Price C."/>
            <person name="Quail M.A."/>
            <person name="Urushihara H."/>
            <person name="Hernandez J."/>
            <person name="Rabbinowitsch E."/>
            <person name="Steffen D."/>
            <person name="Sanders M."/>
            <person name="Ma J."/>
            <person name="Kohara Y."/>
            <person name="Sharp S."/>
            <person name="Simmonds M.N."/>
            <person name="Spiegler S."/>
            <person name="Tivey A."/>
            <person name="Sugano S."/>
            <person name="White B."/>
            <person name="Walker D."/>
            <person name="Woodward J.R."/>
            <person name="Winckler T."/>
            <person name="Tanaka Y."/>
            <person name="Shaulsky G."/>
            <person name="Schleicher M."/>
            <person name="Weinstock G.M."/>
            <person name="Rosenthal A."/>
            <person name="Cox E.C."/>
            <person name="Chisholm R.L."/>
            <person name="Gibbs R.A."/>
            <person name="Loomis W.F."/>
            <person name="Platzer M."/>
            <person name="Kay R.R."/>
            <person name="Williams J.G."/>
            <person name="Dear P.H."/>
            <person name="Noegel A.A."/>
            <person name="Barrell B.G."/>
            <person name="Kuspa A."/>
        </authorList>
    </citation>
    <scope>NUCLEOTIDE SEQUENCE [LARGE SCALE GENOMIC DNA]</scope>
    <source>
        <strain>AX4</strain>
    </source>
</reference>
<gene>
    <name type="primary">rnf113</name>
    <name type="ORF">DDB_G0267870</name>
</gene>
<feature type="chain" id="PRO_0000328267" description="RING finger protein 113 homolog">
    <location>
        <begin position="1"/>
        <end position="355"/>
    </location>
</feature>
<feature type="zinc finger region" description="C3H1-type" evidence="2">
    <location>
        <begin position="214"/>
        <end position="237"/>
    </location>
</feature>
<feature type="zinc finger region" description="RING-type" evidence="1">
    <location>
        <begin position="287"/>
        <end position="325"/>
    </location>
</feature>
<feature type="region of interest" description="Disordered" evidence="3">
    <location>
        <begin position="1"/>
        <end position="167"/>
    </location>
</feature>
<feature type="region of interest" description="Disordered" evidence="3">
    <location>
        <begin position="258"/>
        <end position="277"/>
    </location>
</feature>
<feature type="compositionally biased region" description="Low complexity" evidence="3">
    <location>
        <begin position="8"/>
        <end position="18"/>
    </location>
</feature>
<feature type="compositionally biased region" description="Basic residues" evidence="3">
    <location>
        <begin position="37"/>
        <end position="48"/>
    </location>
</feature>
<feature type="compositionally biased region" description="Acidic residues" evidence="3">
    <location>
        <begin position="62"/>
        <end position="71"/>
    </location>
</feature>
<feature type="compositionally biased region" description="Low complexity" evidence="3">
    <location>
        <begin position="99"/>
        <end position="110"/>
    </location>
</feature>
<feature type="compositionally biased region" description="Low complexity" evidence="3">
    <location>
        <begin position="131"/>
        <end position="155"/>
    </location>
</feature>
<feature type="compositionally biased region" description="Low complexity" evidence="3">
    <location>
        <begin position="259"/>
        <end position="271"/>
    </location>
</feature>
<dbReference type="EMBL" id="AAFI02000003">
    <property type="protein sequence ID" value="EAL73388.1"/>
    <property type="molecule type" value="Genomic_DNA"/>
</dbReference>
<dbReference type="RefSeq" id="XP_647367.1">
    <property type="nucleotide sequence ID" value="XM_642275.1"/>
</dbReference>
<dbReference type="FunCoup" id="Q55G16">
    <property type="interactions" value="200"/>
</dbReference>
<dbReference type="STRING" id="44689.Q55G16"/>
<dbReference type="PaxDb" id="44689-DDB0233743"/>
<dbReference type="EnsemblProtists" id="EAL73388">
    <property type="protein sequence ID" value="EAL73388"/>
    <property type="gene ID" value="DDB_G0267870"/>
</dbReference>
<dbReference type="GeneID" id="8616178"/>
<dbReference type="KEGG" id="ddi:DDB_G0267870"/>
<dbReference type="dictyBase" id="DDB_G0267870">
    <property type="gene designation" value="rnf113"/>
</dbReference>
<dbReference type="VEuPathDB" id="AmoebaDB:DDB_G0267870"/>
<dbReference type="eggNOG" id="KOG1813">
    <property type="taxonomic scope" value="Eukaryota"/>
</dbReference>
<dbReference type="HOGENOM" id="CLU_050460_1_2_1"/>
<dbReference type="InParanoid" id="Q55G16"/>
<dbReference type="OMA" id="YKQTGQC"/>
<dbReference type="PhylomeDB" id="Q55G16"/>
<dbReference type="PRO" id="PR:Q55G16"/>
<dbReference type="Proteomes" id="UP000002195">
    <property type="component" value="Chromosome 1"/>
</dbReference>
<dbReference type="GO" id="GO:0005634">
    <property type="term" value="C:nucleus"/>
    <property type="evidence" value="ECO:0000314"/>
    <property type="project" value="dictyBase"/>
</dbReference>
<dbReference type="GO" id="GO:0005684">
    <property type="term" value="C:U2-type spliceosomal complex"/>
    <property type="evidence" value="ECO:0000318"/>
    <property type="project" value="GO_Central"/>
</dbReference>
<dbReference type="GO" id="GO:0008270">
    <property type="term" value="F:zinc ion binding"/>
    <property type="evidence" value="ECO:0007669"/>
    <property type="project" value="UniProtKB-KW"/>
</dbReference>
<dbReference type="GO" id="GO:0034247">
    <property type="term" value="P:snoRNA splicing"/>
    <property type="evidence" value="ECO:0000318"/>
    <property type="project" value="GO_Central"/>
</dbReference>
<dbReference type="CDD" id="cd16539">
    <property type="entry name" value="RING-HC_RNF113A_B"/>
    <property type="match status" value="1"/>
</dbReference>
<dbReference type="FunFam" id="3.30.40.10:FF:001416">
    <property type="entry name" value="RING finger protein 113 homolog"/>
    <property type="match status" value="1"/>
</dbReference>
<dbReference type="Gene3D" id="4.10.1000.10">
    <property type="entry name" value="Zinc finger, CCCH-type"/>
    <property type="match status" value="1"/>
</dbReference>
<dbReference type="Gene3D" id="3.30.40.10">
    <property type="entry name" value="Zinc/RING finger domain, C3HC4 (zinc finger)"/>
    <property type="match status" value="1"/>
</dbReference>
<dbReference type="InterPro" id="IPR039971">
    <property type="entry name" value="CWC24-like"/>
</dbReference>
<dbReference type="InterPro" id="IPR000571">
    <property type="entry name" value="Znf_CCCH"/>
</dbReference>
<dbReference type="InterPro" id="IPR036855">
    <property type="entry name" value="Znf_CCCH_sf"/>
</dbReference>
<dbReference type="InterPro" id="IPR001841">
    <property type="entry name" value="Znf_RING"/>
</dbReference>
<dbReference type="InterPro" id="IPR013083">
    <property type="entry name" value="Znf_RING/FYVE/PHD"/>
</dbReference>
<dbReference type="InterPro" id="IPR017907">
    <property type="entry name" value="Znf_RING_CS"/>
</dbReference>
<dbReference type="PANTHER" id="PTHR12930:SF0">
    <property type="entry name" value="RING FINGER PROTEIN 113B"/>
    <property type="match status" value="1"/>
</dbReference>
<dbReference type="PANTHER" id="PTHR12930">
    <property type="entry name" value="ZINC FINGER PROTEIN 183"/>
    <property type="match status" value="1"/>
</dbReference>
<dbReference type="Pfam" id="PF13920">
    <property type="entry name" value="zf-C3HC4_3"/>
    <property type="match status" value="1"/>
</dbReference>
<dbReference type="Pfam" id="PF00642">
    <property type="entry name" value="zf-CCCH"/>
    <property type="match status" value="1"/>
</dbReference>
<dbReference type="SMART" id="SM00184">
    <property type="entry name" value="RING"/>
    <property type="match status" value="1"/>
</dbReference>
<dbReference type="SMART" id="SM00356">
    <property type="entry name" value="ZnF_C3H1"/>
    <property type="match status" value="1"/>
</dbReference>
<dbReference type="SUPFAM" id="SSF90229">
    <property type="entry name" value="CCCH zinc finger"/>
    <property type="match status" value="1"/>
</dbReference>
<dbReference type="SUPFAM" id="SSF57850">
    <property type="entry name" value="RING/U-box"/>
    <property type="match status" value="1"/>
</dbReference>
<dbReference type="PROSITE" id="PS50103">
    <property type="entry name" value="ZF_C3H1"/>
    <property type="match status" value="1"/>
</dbReference>
<dbReference type="PROSITE" id="PS00518">
    <property type="entry name" value="ZF_RING_1"/>
    <property type="match status" value="1"/>
</dbReference>
<dbReference type="PROSITE" id="PS50089">
    <property type="entry name" value="ZF_RING_2"/>
    <property type="match status" value="1"/>
</dbReference>
<name>RN113_DICDI</name>
<accession>Q55G16</accession>
<evidence type="ECO:0000255" key="1">
    <source>
        <dbReference type="PROSITE-ProRule" id="PRU00175"/>
    </source>
</evidence>
<evidence type="ECO:0000255" key="2">
    <source>
        <dbReference type="PROSITE-ProRule" id="PRU00723"/>
    </source>
</evidence>
<evidence type="ECO:0000256" key="3">
    <source>
        <dbReference type="SAM" id="MobiDB-lite"/>
    </source>
</evidence>
<sequence>MEKEESTNKNNENIQSENEINKIDNKSNTENPTIKCIFKKPNKQRNIRKRSDDLILNTSNNADEEDEDGNEEKDKKKLKSKINQYTTKQDKKNEFSYDSSGNAGSSINSAELSSTQYMNEEEEFKKEVVLSSSRNNNNNNNNNNNNNNDNISNSEGSGGSDNNDDGIYRGMKSYSTFVEKKSDLTYKGGGVKAGPMKTSTTFKLSNRIDHQPDVCKDYKQTGQCTFGDACKFLHDRSDYKSGWQIDKEYEEEQKQKRLNNINGIKNNNNDNKNNDDDKEQQQFPFACFICKKQYVDPVQTKCKHFFCEDCALTHNRKNKKCALCGEPTLGTFITPPKKILDQLMEISKSHFKNQS</sequence>